<comment type="function">
    <text evidence="4">Retinol dehydrogenase with a clear preference for NADP. Converts all-trans-retinal to all-trans-retinol. May play a role in the regeneration of visual pigment at high light intensity.</text>
</comment>
<comment type="catalytic activity">
    <reaction evidence="4">
        <text>all-trans-retinol + NADP(+) = all-trans-retinal + NADPH + H(+)</text>
        <dbReference type="Rhea" id="RHEA:25033"/>
        <dbReference type="ChEBI" id="CHEBI:15378"/>
        <dbReference type="ChEBI" id="CHEBI:17336"/>
        <dbReference type="ChEBI" id="CHEBI:17898"/>
        <dbReference type="ChEBI" id="CHEBI:57783"/>
        <dbReference type="ChEBI" id="CHEBI:58349"/>
        <dbReference type="EC" id="1.1.1.300"/>
    </reaction>
</comment>
<comment type="subcellular location">
    <subcellularLocation>
        <location evidence="6">Membrane</location>
        <topology evidence="5">Multi-pass membrane protein</topology>
    </subcellularLocation>
</comment>
<comment type="tissue specificity">
    <text evidence="4">Detected in photoreceptor outer segments in the retina (at protein level).</text>
</comment>
<comment type="similarity">
    <text evidence="5">Belongs to the short-chain dehydrogenases/reductases (SDR) family.</text>
</comment>
<protein>
    <recommendedName>
        <fullName>Retinol dehydrogenase 8</fullName>
        <ecNumber evidence="4">1.1.1.300</ecNumber>
    </recommendedName>
    <alternativeName>
        <fullName>Photoreceptor outer segment all-trans retinol dehydrogenase</fullName>
    </alternativeName>
</protein>
<gene>
    <name type="primary">RDH8</name>
    <name type="synonym">PRRDH</name>
</gene>
<proteinExistence type="evidence at protein level"/>
<sequence length="312" mass="33956">MADAPRTVLISGCSSGIGLELAVQLAHDPRQRYQVVATMRDLGKKGTLETAAGEALGQTLTVAQLDVCSDESVAQCLNCIQGGEVDVLVNNAGVGLVGPLEGLSLAAMQNVFDTNFFGAVRLVKAVLPSMKRRRQGHIVVVSSVMGLQGVVFNEVYAASKFAMEGFFESLAVQLLQFNIFISLVEPGPVVTEFEGKLLEQVSTAEFPGTDPDTLSYFRDLYLPASRELFHNVGQSPQDVAKVIVKVIGSARPPLRRRTNTRYTPLIALKAMDPSGSLYVRTSHCLLFRWPRLLNLGLRCLACSCFRTPVWPR</sequence>
<accession>Q9N126</accession>
<evidence type="ECO:0000250" key="1">
    <source>
        <dbReference type="UniProtKB" id="Q12634"/>
    </source>
</evidence>
<evidence type="ECO:0000255" key="2"/>
<evidence type="ECO:0000255" key="3">
    <source>
        <dbReference type="PROSITE-ProRule" id="PRU10001"/>
    </source>
</evidence>
<evidence type="ECO:0000269" key="4">
    <source>
    </source>
</evidence>
<evidence type="ECO:0000305" key="5"/>
<evidence type="ECO:0000305" key="6">
    <source>
    </source>
</evidence>
<organism>
    <name type="scientific">Bos taurus</name>
    <name type="common">Bovine</name>
    <dbReference type="NCBI Taxonomy" id="9913"/>
    <lineage>
        <taxon>Eukaryota</taxon>
        <taxon>Metazoa</taxon>
        <taxon>Chordata</taxon>
        <taxon>Craniata</taxon>
        <taxon>Vertebrata</taxon>
        <taxon>Euteleostomi</taxon>
        <taxon>Mammalia</taxon>
        <taxon>Eutheria</taxon>
        <taxon>Laurasiatheria</taxon>
        <taxon>Artiodactyla</taxon>
        <taxon>Ruminantia</taxon>
        <taxon>Pecora</taxon>
        <taxon>Bovidae</taxon>
        <taxon>Bovinae</taxon>
        <taxon>Bos</taxon>
    </lineage>
</organism>
<feature type="chain" id="PRO_0000305971" description="Retinol dehydrogenase 8">
    <location>
        <begin position="1"/>
        <end position="312"/>
    </location>
</feature>
<feature type="transmembrane region" description="Helical" evidence="2">
    <location>
        <begin position="87"/>
        <end position="107"/>
    </location>
</feature>
<feature type="transmembrane region" description="Helical" evidence="2">
    <location>
        <begin position="138"/>
        <end position="158"/>
    </location>
</feature>
<feature type="transmembrane region" description="Helical" evidence="2">
    <location>
        <begin position="170"/>
        <end position="190"/>
    </location>
</feature>
<feature type="active site" description="Proton acceptor" evidence="3">
    <location>
        <position position="156"/>
    </location>
</feature>
<feature type="binding site" evidence="1">
    <location>
        <begin position="9"/>
        <end position="18"/>
    </location>
    <ligand>
        <name>NADP(+)</name>
        <dbReference type="ChEBI" id="CHEBI:58349"/>
    </ligand>
</feature>
<feature type="binding site" evidence="2">
    <location>
        <position position="143"/>
    </location>
    <ligand>
        <name>substrate</name>
    </ligand>
</feature>
<dbReference type="EC" id="1.1.1.300" evidence="4"/>
<dbReference type="EMBL" id="AF229846">
    <property type="protein sequence ID" value="AAF63161.1"/>
    <property type="molecule type" value="mRNA"/>
</dbReference>
<dbReference type="RefSeq" id="NP_776592.1">
    <property type="nucleotide sequence ID" value="NM_174167.2"/>
</dbReference>
<dbReference type="SMR" id="Q9N126"/>
<dbReference type="FunCoup" id="Q9N126">
    <property type="interactions" value="14"/>
</dbReference>
<dbReference type="STRING" id="9913.ENSBTAP00000013443"/>
<dbReference type="PaxDb" id="9913-ENSBTAP00000013443"/>
<dbReference type="GeneID" id="281449"/>
<dbReference type="KEGG" id="bta:281449"/>
<dbReference type="CTD" id="50700"/>
<dbReference type="VEuPathDB" id="HostDB:ENSBTAG00000010188"/>
<dbReference type="eggNOG" id="KOG1205">
    <property type="taxonomic scope" value="Eukaryota"/>
</dbReference>
<dbReference type="HOGENOM" id="CLU_010194_2_9_1"/>
<dbReference type="InParanoid" id="Q9N126"/>
<dbReference type="OMA" id="VRTTHCL"/>
<dbReference type="OrthoDB" id="47007at2759"/>
<dbReference type="TreeFam" id="TF105451"/>
<dbReference type="Proteomes" id="UP000009136">
    <property type="component" value="Chromosome 7"/>
</dbReference>
<dbReference type="Bgee" id="ENSBTAG00000010188">
    <property type="expression patterns" value="Expressed in retina and 14 other cell types or tissues"/>
</dbReference>
<dbReference type="GO" id="GO:0005829">
    <property type="term" value="C:cytosol"/>
    <property type="evidence" value="ECO:0000318"/>
    <property type="project" value="GO_Central"/>
</dbReference>
<dbReference type="GO" id="GO:0042622">
    <property type="term" value="C:photoreceptor outer segment membrane"/>
    <property type="evidence" value="ECO:0000304"/>
    <property type="project" value="Reactome"/>
</dbReference>
<dbReference type="GO" id="GO:0004745">
    <property type="term" value="F:all-trans-retinol dehydrogenase (NAD+) activity"/>
    <property type="evidence" value="ECO:0000318"/>
    <property type="project" value="GO_Central"/>
</dbReference>
<dbReference type="GO" id="GO:0052650">
    <property type="term" value="F:all-trans-retinol dehydrogenase (NADP+) activity"/>
    <property type="evidence" value="ECO:0000304"/>
    <property type="project" value="Reactome"/>
</dbReference>
<dbReference type="GO" id="GO:0004303">
    <property type="term" value="F:estradiol 17-beta-dehydrogenase [NAD(P)+] activity"/>
    <property type="evidence" value="ECO:0007669"/>
    <property type="project" value="InterPro"/>
</dbReference>
<dbReference type="GO" id="GO:0006703">
    <property type="term" value="P:estrogen biosynthetic process"/>
    <property type="evidence" value="ECO:0007669"/>
    <property type="project" value="InterPro"/>
</dbReference>
<dbReference type="GO" id="GO:0042572">
    <property type="term" value="P:retinol metabolic process"/>
    <property type="evidence" value="ECO:0000318"/>
    <property type="project" value="GO_Central"/>
</dbReference>
<dbReference type="GO" id="GO:0007601">
    <property type="term" value="P:visual perception"/>
    <property type="evidence" value="ECO:0007669"/>
    <property type="project" value="UniProtKB-KW"/>
</dbReference>
<dbReference type="CDD" id="cd09806">
    <property type="entry name" value="type1_17beta-HSD-like_SDR_c"/>
    <property type="match status" value="1"/>
</dbReference>
<dbReference type="FunFam" id="3.40.50.720:FF:000323">
    <property type="entry name" value="Estradiol 17-beta-dehydrogenase 1"/>
    <property type="match status" value="1"/>
</dbReference>
<dbReference type="Gene3D" id="3.40.50.720">
    <property type="entry name" value="NAD(P)-binding Rossmann-like Domain"/>
    <property type="match status" value="1"/>
</dbReference>
<dbReference type="InterPro" id="IPR011348">
    <property type="entry name" value="17beta_DH"/>
</dbReference>
<dbReference type="InterPro" id="IPR036291">
    <property type="entry name" value="NAD(P)-bd_dom_sf"/>
</dbReference>
<dbReference type="InterPro" id="IPR020904">
    <property type="entry name" value="Sc_DH/Rdtase_CS"/>
</dbReference>
<dbReference type="InterPro" id="IPR002347">
    <property type="entry name" value="SDR_fam"/>
</dbReference>
<dbReference type="PANTHER" id="PTHR43391:SF8">
    <property type="entry name" value="RETINOL DEHYDROGENASE 8"/>
    <property type="match status" value="1"/>
</dbReference>
<dbReference type="PANTHER" id="PTHR43391">
    <property type="entry name" value="RETINOL DEHYDROGENASE-RELATED"/>
    <property type="match status" value="1"/>
</dbReference>
<dbReference type="Pfam" id="PF00106">
    <property type="entry name" value="adh_short"/>
    <property type="match status" value="1"/>
</dbReference>
<dbReference type="PIRSF" id="PIRSF000095">
    <property type="entry name" value="17beta-HSD"/>
    <property type="match status" value="1"/>
</dbReference>
<dbReference type="PRINTS" id="PR00081">
    <property type="entry name" value="GDHRDH"/>
</dbReference>
<dbReference type="PRINTS" id="PR00080">
    <property type="entry name" value="SDRFAMILY"/>
</dbReference>
<dbReference type="SMART" id="SM00822">
    <property type="entry name" value="PKS_KR"/>
    <property type="match status" value="1"/>
</dbReference>
<dbReference type="SUPFAM" id="SSF51735">
    <property type="entry name" value="NAD(P)-binding Rossmann-fold domains"/>
    <property type="match status" value="1"/>
</dbReference>
<dbReference type="PROSITE" id="PS00061">
    <property type="entry name" value="ADH_SHORT"/>
    <property type="match status" value="1"/>
</dbReference>
<name>RDH8_BOVIN</name>
<keyword id="KW-0443">Lipid metabolism</keyword>
<keyword id="KW-0472">Membrane</keyword>
<keyword id="KW-0521">NADP</keyword>
<keyword id="KW-0560">Oxidoreductase</keyword>
<keyword id="KW-1185">Reference proteome</keyword>
<keyword id="KW-0716">Sensory transduction</keyword>
<keyword id="KW-0812">Transmembrane</keyword>
<keyword id="KW-1133">Transmembrane helix</keyword>
<keyword id="KW-0844">Vision</keyword>
<reference key="1">
    <citation type="journal article" date="2000" name="J. Biol. Chem.">
        <title>Identification and characterization of all-trans-retinol dehydrogenase from photoreceptor outer segments, the visual cycle enzyme that reduces all-trans-retinal to all-trans-retinol.</title>
        <authorList>
            <person name="Rattner A."/>
            <person name="Smallwood P.M."/>
            <person name="Nathans J."/>
        </authorList>
    </citation>
    <scope>NUCLEOTIDE SEQUENCE [MRNA]</scope>
    <scope>FUNCTION</scope>
    <scope>CATALYTIC ACTIVITY</scope>
    <scope>SUBCELLULAR LOCATION</scope>
    <scope>TISSUE SPECIFICITY</scope>
    <source>
        <tissue>Retina</tissue>
    </source>
</reference>